<feature type="chain" id="PRO_0000300960" description="Glutamate-1-semialdehyde 2,1-aminomutase">
    <location>
        <begin position="1"/>
        <end position="426"/>
    </location>
</feature>
<feature type="modified residue" description="N6-(pyridoxal phosphate)lysine" evidence="1">
    <location>
        <position position="265"/>
    </location>
</feature>
<organism>
    <name type="scientific">Yersinia pestis bv. Antiqua (strain Antiqua)</name>
    <dbReference type="NCBI Taxonomy" id="360102"/>
    <lineage>
        <taxon>Bacteria</taxon>
        <taxon>Pseudomonadati</taxon>
        <taxon>Pseudomonadota</taxon>
        <taxon>Gammaproteobacteria</taxon>
        <taxon>Enterobacterales</taxon>
        <taxon>Yersiniaceae</taxon>
        <taxon>Yersinia</taxon>
    </lineage>
</organism>
<reference key="1">
    <citation type="journal article" date="2006" name="J. Bacteriol.">
        <title>Complete genome sequence of Yersinia pestis strains Antiqua and Nepal516: evidence of gene reduction in an emerging pathogen.</title>
        <authorList>
            <person name="Chain P.S.G."/>
            <person name="Hu P."/>
            <person name="Malfatti S.A."/>
            <person name="Radnedge L."/>
            <person name="Larimer F."/>
            <person name="Vergez L.M."/>
            <person name="Worsham P."/>
            <person name="Chu M.C."/>
            <person name="Andersen G.L."/>
        </authorList>
    </citation>
    <scope>NUCLEOTIDE SEQUENCE [LARGE SCALE GENOMIC DNA]</scope>
    <source>
        <strain>Antiqua</strain>
    </source>
</reference>
<evidence type="ECO:0000255" key="1">
    <source>
        <dbReference type="HAMAP-Rule" id="MF_00375"/>
    </source>
</evidence>
<gene>
    <name evidence="1" type="primary">hemL</name>
    <name type="ordered locus">YPA_2889</name>
</gene>
<keyword id="KW-0963">Cytoplasm</keyword>
<keyword id="KW-0413">Isomerase</keyword>
<keyword id="KW-0627">Porphyrin biosynthesis</keyword>
<keyword id="KW-0663">Pyridoxal phosphate</keyword>
<sequence>MSKSENLYAQAQQLIPGGVNSPVRAFTGVGGIPLFIERADGAYLFDVDGKAYIDYVGSWGPMILGHNHPAIRQAVIEAVERGLSFGAPTEMEVKMAQLVTDLVPTMDMVRMVNSGTEATMSAIRLARGYTGRDKIIKFEGCYHGHADCLLVKAGSGALTLGQPNSPGVPTDFAKHTLTCTYNDLASVRQAFEQYPQEVACIIVEPVAGNMNCIPPLPEFLPGLRALCDEFGALLIIDEVMTGFRVALAGAQDYYHVIPDLTCLGKIIGGGMPVGAFGGRREVMNALAPTGPVYQAGTLSGNPIAMAAGFACLTEISQVGVYETLTELTDSLATGLRHAAKEENIPLVVNHVGGMFGLFFTNADTVTCYQDVMNCDVERFKRFFHLMLEEGVYLAPSAFEAGFMSLAHSNEDIQKTVNAARRCFAKL</sequence>
<accession>Q1C3X1</accession>
<proteinExistence type="inferred from homology"/>
<name>GSA_YERPA</name>
<comment type="catalytic activity">
    <reaction evidence="1">
        <text>(S)-4-amino-5-oxopentanoate = 5-aminolevulinate</text>
        <dbReference type="Rhea" id="RHEA:14265"/>
        <dbReference type="ChEBI" id="CHEBI:57501"/>
        <dbReference type="ChEBI" id="CHEBI:356416"/>
        <dbReference type="EC" id="5.4.3.8"/>
    </reaction>
</comment>
<comment type="cofactor">
    <cofactor evidence="1">
        <name>pyridoxal 5'-phosphate</name>
        <dbReference type="ChEBI" id="CHEBI:597326"/>
    </cofactor>
</comment>
<comment type="pathway">
    <text evidence="1">Porphyrin-containing compound metabolism; protoporphyrin-IX biosynthesis; 5-aminolevulinate from L-glutamyl-tRNA(Glu): step 2/2.</text>
</comment>
<comment type="subunit">
    <text evidence="1">Homodimer.</text>
</comment>
<comment type="subcellular location">
    <subcellularLocation>
        <location evidence="1">Cytoplasm</location>
    </subcellularLocation>
</comment>
<comment type="similarity">
    <text evidence="1">Belongs to the class-III pyridoxal-phosphate-dependent aminotransferase family. HemL subfamily.</text>
</comment>
<protein>
    <recommendedName>
        <fullName evidence="1">Glutamate-1-semialdehyde 2,1-aminomutase</fullName>
        <shortName evidence="1">GSA</shortName>
        <ecNumber evidence="1">5.4.3.8</ecNumber>
    </recommendedName>
    <alternativeName>
        <fullName evidence="1">Glutamate-1-semialdehyde aminotransferase</fullName>
        <shortName evidence="1">GSA-AT</shortName>
    </alternativeName>
</protein>
<dbReference type="EC" id="5.4.3.8" evidence="1"/>
<dbReference type="EMBL" id="CP000308">
    <property type="protein sequence ID" value="ABG14851.1"/>
    <property type="molecule type" value="Genomic_DNA"/>
</dbReference>
<dbReference type="RefSeq" id="WP_002209362.1">
    <property type="nucleotide sequence ID" value="NZ_CP009906.1"/>
</dbReference>
<dbReference type="SMR" id="Q1C3X1"/>
<dbReference type="GeneID" id="57975320"/>
<dbReference type="KEGG" id="ypa:YPA_2889"/>
<dbReference type="UniPathway" id="UPA00251">
    <property type="reaction ID" value="UER00317"/>
</dbReference>
<dbReference type="Proteomes" id="UP000001971">
    <property type="component" value="Chromosome"/>
</dbReference>
<dbReference type="GO" id="GO:0005737">
    <property type="term" value="C:cytoplasm"/>
    <property type="evidence" value="ECO:0007669"/>
    <property type="project" value="UniProtKB-SubCell"/>
</dbReference>
<dbReference type="GO" id="GO:0042286">
    <property type="term" value="F:glutamate-1-semialdehyde 2,1-aminomutase activity"/>
    <property type="evidence" value="ECO:0007669"/>
    <property type="project" value="UniProtKB-UniRule"/>
</dbReference>
<dbReference type="GO" id="GO:0030170">
    <property type="term" value="F:pyridoxal phosphate binding"/>
    <property type="evidence" value="ECO:0007669"/>
    <property type="project" value="InterPro"/>
</dbReference>
<dbReference type="GO" id="GO:0008483">
    <property type="term" value="F:transaminase activity"/>
    <property type="evidence" value="ECO:0007669"/>
    <property type="project" value="InterPro"/>
</dbReference>
<dbReference type="GO" id="GO:0006782">
    <property type="term" value="P:protoporphyrinogen IX biosynthetic process"/>
    <property type="evidence" value="ECO:0007669"/>
    <property type="project" value="UniProtKB-UniRule"/>
</dbReference>
<dbReference type="CDD" id="cd00610">
    <property type="entry name" value="OAT_like"/>
    <property type="match status" value="1"/>
</dbReference>
<dbReference type="FunFam" id="3.40.640.10:FF:000021">
    <property type="entry name" value="Glutamate-1-semialdehyde 2,1-aminomutase"/>
    <property type="match status" value="1"/>
</dbReference>
<dbReference type="FunFam" id="3.90.1150.10:FF:000012">
    <property type="entry name" value="Glutamate-1-semialdehyde 2,1-aminomutase"/>
    <property type="match status" value="1"/>
</dbReference>
<dbReference type="Gene3D" id="3.90.1150.10">
    <property type="entry name" value="Aspartate Aminotransferase, domain 1"/>
    <property type="match status" value="1"/>
</dbReference>
<dbReference type="Gene3D" id="3.40.640.10">
    <property type="entry name" value="Type I PLP-dependent aspartate aminotransferase-like (Major domain)"/>
    <property type="match status" value="1"/>
</dbReference>
<dbReference type="HAMAP" id="MF_00375">
    <property type="entry name" value="HemL_aminotrans_3"/>
    <property type="match status" value="1"/>
</dbReference>
<dbReference type="InterPro" id="IPR004639">
    <property type="entry name" value="4pyrrol_synth_GluAld_NH2Trfase"/>
</dbReference>
<dbReference type="InterPro" id="IPR005814">
    <property type="entry name" value="Aminotrans_3"/>
</dbReference>
<dbReference type="InterPro" id="IPR049704">
    <property type="entry name" value="Aminotrans_3_PPA_site"/>
</dbReference>
<dbReference type="InterPro" id="IPR015424">
    <property type="entry name" value="PyrdxlP-dep_Trfase"/>
</dbReference>
<dbReference type="InterPro" id="IPR015421">
    <property type="entry name" value="PyrdxlP-dep_Trfase_major"/>
</dbReference>
<dbReference type="InterPro" id="IPR015422">
    <property type="entry name" value="PyrdxlP-dep_Trfase_small"/>
</dbReference>
<dbReference type="NCBIfam" id="TIGR00713">
    <property type="entry name" value="hemL"/>
    <property type="match status" value="1"/>
</dbReference>
<dbReference type="NCBIfam" id="NF000818">
    <property type="entry name" value="PRK00062.1"/>
    <property type="match status" value="1"/>
</dbReference>
<dbReference type="PANTHER" id="PTHR43713">
    <property type="entry name" value="GLUTAMATE-1-SEMIALDEHYDE 2,1-AMINOMUTASE"/>
    <property type="match status" value="1"/>
</dbReference>
<dbReference type="PANTHER" id="PTHR43713:SF3">
    <property type="entry name" value="GLUTAMATE-1-SEMIALDEHYDE 2,1-AMINOMUTASE 1, CHLOROPLASTIC-RELATED"/>
    <property type="match status" value="1"/>
</dbReference>
<dbReference type="Pfam" id="PF00202">
    <property type="entry name" value="Aminotran_3"/>
    <property type="match status" value="1"/>
</dbReference>
<dbReference type="SUPFAM" id="SSF53383">
    <property type="entry name" value="PLP-dependent transferases"/>
    <property type="match status" value="1"/>
</dbReference>
<dbReference type="PROSITE" id="PS00600">
    <property type="entry name" value="AA_TRANSFER_CLASS_3"/>
    <property type="match status" value="1"/>
</dbReference>